<protein>
    <recommendedName>
        <fullName>KDP operon transcriptional regulatory protein KdpE</fullName>
    </recommendedName>
</protein>
<keyword id="KW-0002">3D-structure</keyword>
<keyword id="KW-0963">Cytoplasm</keyword>
<keyword id="KW-0238">DNA-binding</keyword>
<keyword id="KW-0597">Phosphoprotein</keyword>
<keyword id="KW-1185">Reference proteome</keyword>
<keyword id="KW-0804">Transcription</keyword>
<keyword id="KW-0805">Transcription regulation</keyword>
<keyword id="KW-0902">Two-component regulatory system</keyword>
<proteinExistence type="evidence at protein level"/>
<organism>
    <name type="scientific">Escherichia coli (strain K12)</name>
    <dbReference type="NCBI Taxonomy" id="83333"/>
    <lineage>
        <taxon>Bacteria</taxon>
        <taxon>Pseudomonadati</taxon>
        <taxon>Pseudomonadota</taxon>
        <taxon>Gammaproteobacteria</taxon>
        <taxon>Enterobacterales</taxon>
        <taxon>Enterobacteriaceae</taxon>
        <taxon>Escherichia</taxon>
    </lineage>
</organism>
<comment type="function">
    <text evidence="3">Member of the two-component regulatory system KdpD/KdpE involved in the regulation of the kdp operon.</text>
</comment>
<comment type="interaction">
    <interactant intactId="EBI-6403634">
        <id>P21866</id>
    </interactant>
    <interactant intactId="EBI-1123100">
        <id>P21865</id>
        <label>kdpD</label>
    </interactant>
    <organismsDiffer>false</organismsDiffer>
    <experiments>5</experiments>
</comment>
<comment type="interaction">
    <interactant intactId="EBI-6403634">
        <id>P21866</id>
    </interactant>
    <interactant intactId="EBI-558990">
        <id>P52108</id>
        <label>rstA</label>
    </interactant>
    <organismsDiffer>false</organismsDiffer>
    <experiments>2</experiments>
</comment>
<comment type="subcellular location">
    <subcellularLocation>
        <location evidence="3">Cytoplasm</location>
    </subcellularLocation>
</comment>
<comment type="PTM">
    <text evidence="4">Phosphorylated by KdpD.</text>
</comment>
<dbReference type="EMBL" id="M36066">
    <property type="protein sequence ID" value="AAA24042.1"/>
    <property type="molecule type" value="Genomic_DNA"/>
</dbReference>
<dbReference type="EMBL" id="U00096">
    <property type="protein sequence ID" value="AAC73788.1"/>
    <property type="molecule type" value="Genomic_DNA"/>
</dbReference>
<dbReference type="EMBL" id="AP009048">
    <property type="protein sequence ID" value="BAA35351.2"/>
    <property type="molecule type" value="Genomic_DNA"/>
</dbReference>
<dbReference type="PIR" id="E64804">
    <property type="entry name" value="E64804"/>
</dbReference>
<dbReference type="RefSeq" id="NP_415222.1">
    <property type="nucleotide sequence ID" value="NC_000913.3"/>
</dbReference>
<dbReference type="RefSeq" id="WP_000186076.1">
    <property type="nucleotide sequence ID" value="NZ_SSZK01000045.1"/>
</dbReference>
<dbReference type="PDB" id="1ZH2">
    <property type="method" value="X-ray"/>
    <property type="resolution" value="2.00 A"/>
    <property type="chains" value="A/B=1-121"/>
</dbReference>
<dbReference type="PDB" id="1ZH4">
    <property type="method" value="X-ray"/>
    <property type="resolution" value="2.20 A"/>
    <property type="chains" value="A/B=1-121"/>
</dbReference>
<dbReference type="PDB" id="3ZQ7">
    <property type="method" value="X-ray"/>
    <property type="resolution" value="2.52 A"/>
    <property type="chains" value="A=124-225"/>
</dbReference>
<dbReference type="PDB" id="4KFC">
    <property type="method" value="X-ray"/>
    <property type="resolution" value="2.53 A"/>
    <property type="chains" value="A/B=3-225"/>
</dbReference>
<dbReference type="PDB" id="4KNY">
    <property type="method" value="X-ray"/>
    <property type="resolution" value="2.94 A"/>
    <property type="chains" value="A/B=3-225"/>
</dbReference>
<dbReference type="PDB" id="4L85">
    <property type="method" value="X-ray"/>
    <property type="resolution" value="2.20 A"/>
    <property type="chains" value="A/B/C=3-121"/>
</dbReference>
<dbReference type="PDB" id="6LGQ">
    <property type="method" value="X-ray"/>
    <property type="resolution" value="3.00 A"/>
    <property type="chains" value="D=1-225"/>
</dbReference>
<dbReference type="PDBsum" id="1ZH2"/>
<dbReference type="PDBsum" id="1ZH4"/>
<dbReference type="PDBsum" id="3ZQ7"/>
<dbReference type="PDBsum" id="4KFC"/>
<dbReference type="PDBsum" id="4KNY"/>
<dbReference type="PDBsum" id="4L85"/>
<dbReference type="PDBsum" id="6LGQ"/>
<dbReference type="SMR" id="P21866"/>
<dbReference type="BioGRID" id="4259924">
    <property type="interactions" value="87"/>
</dbReference>
<dbReference type="BioGRID" id="849679">
    <property type="interactions" value="1"/>
</dbReference>
<dbReference type="DIP" id="DIP-10063N"/>
<dbReference type="FunCoup" id="P21866">
    <property type="interactions" value="391"/>
</dbReference>
<dbReference type="IntAct" id="P21866">
    <property type="interactions" value="2"/>
</dbReference>
<dbReference type="STRING" id="511145.b0694"/>
<dbReference type="CARD" id="ARO:3003841">
    <property type="molecule name" value="kdpE"/>
    <property type="mechanism identifier" value="ARO:0010000"/>
    <property type="mechanism name" value="antibiotic efflux"/>
</dbReference>
<dbReference type="jPOST" id="P21866"/>
<dbReference type="PaxDb" id="511145-b0694"/>
<dbReference type="EnsemblBacteria" id="AAC73788">
    <property type="protein sequence ID" value="AAC73788"/>
    <property type="gene ID" value="b0694"/>
</dbReference>
<dbReference type="GeneID" id="945302"/>
<dbReference type="KEGG" id="ecj:JW5096"/>
<dbReference type="KEGG" id="eco:b0694"/>
<dbReference type="KEGG" id="ecoc:C3026_03465"/>
<dbReference type="PATRIC" id="fig|1411691.4.peg.1581"/>
<dbReference type="EchoBASE" id="EB0512"/>
<dbReference type="eggNOG" id="COG0745">
    <property type="taxonomic scope" value="Bacteria"/>
</dbReference>
<dbReference type="HOGENOM" id="CLU_000445_30_8_6"/>
<dbReference type="InParanoid" id="P21866"/>
<dbReference type="OMA" id="MGYRFER"/>
<dbReference type="OrthoDB" id="9802426at2"/>
<dbReference type="PhylomeDB" id="P21866"/>
<dbReference type="BioCyc" id="EcoCyc:KDPE-MONOMER"/>
<dbReference type="EvolutionaryTrace" id="P21866"/>
<dbReference type="PRO" id="PR:P21866"/>
<dbReference type="Proteomes" id="UP000000625">
    <property type="component" value="Chromosome"/>
</dbReference>
<dbReference type="GO" id="GO:0005829">
    <property type="term" value="C:cytosol"/>
    <property type="evidence" value="ECO:0000318"/>
    <property type="project" value="GO_Central"/>
</dbReference>
<dbReference type="GO" id="GO:0032993">
    <property type="term" value="C:protein-DNA complex"/>
    <property type="evidence" value="ECO:0000318"/>
    <property type="project" value="GO_Central"/>
</dbReference>
<dbReference type="GO" id="GO:0000987">
    <property type="term" value="F:cis-regulatory region sequence-specific DNA binding"/>
    <property type="evidence" value="ECO:0000314"/>
    <property type="project" value="EcoCyc"/>
</dbReference>
<dbReference type="GO" id="GO:0001216">
    <property type="term" value="F:DNA-binding transcription activator activity"/>
    <property type="evidence" value="ECO:0000314"/>
    <property type="project" value="EcoCyc"/>
</dbReference>
<dbReference type="GO" id="GO:0003700">
    <property type="term" value="F:DNA-binding transcription factor activity"/>
    <property type="evidence" value="ECO:0000314"/>
    <property type="project" value="EcoCyc"/>
</dbReference>
<dbReference type="GO" id="GO:0000156">
    <property type="term" value="F:phosphorelay response regulator activity"/>
    <property type="evidence" value="ECO:0000318"/>
    <property type="project" value="GO_Central"/>
</dbReference>
<dbReference type="GO" id="GO:0042803">
    <property type="term" value="F:protein homodimerization activity"/>
    <property type="evidence" value="ECO:0000314"/>
    <property type="project" value="EcoCyc"/>
</dbReference>
<dbReference type="GO" id="GO:0000976">
    <property type="term" value="F:transcription cis-regulatory region binding"/>
    <property type="evidence" value="ECO:0000318"/>
    <property type="project" value="GO_Central"/>
</dbReference>
<dbReference type="GO" id="GO:0006355">
    <property type="term" value="P:regulation of DNA-templated transcription"/>
    <property type="evidence" value="ECO:0000315"/>
    <property type="project" value="EcoCyc"/>
</dbReference>
<dbReference type="CDD" id="cd17620">
    <property type="entry name" value="REC_OmpR_KdpE-like"/>
    <property type="match status" value="1"/>
</dbReference>
<dbReference type="CDD" id="cd00383">
    <property type="entry name" value="trans_reg_C"/>
    <property type="match status" value="1"/>
</dbReference>
<dbReference type="FunFam" id="3.40.50.2300:FF:000021">
    <property type="entry name" value="Two-component system response regulator KdpE"/>
    <property type="match status" value="1"/>
</dbReference>
<dbReference type="FunFam" id="1.10.10.10:FF:000210">
    <property type="entry name" value="Winged-helix transcriptional response regulator KdpE"/>
    <property type="match status" value="1"/>
</dbReference>
<dbReference type="Gene3D" id="3.40.50.2300">
    <property type="match status" value="1"/>
</dbReference>
<dbReference type="Gene3D" id="6.10.250.690">
    <property type="match status" value="1"/>
</dbReference>
<dbReference type="Gene3D" id="1.10.10.10">
    <property type="entry name" value="Winged helix-like DNA-binding domain superfamily/Winged helix DNA-binding domain"/>
    <property type="match status" value="1"/>
</dbReference>
<dbReference type="InterPro" id="IPR011006">
    <property type="entry name" value="CheY-like_superfamily"/>
</dbReference>
<dbReference type="InterPro" id="IPR001867">
    <property type="entry name" value="OmpR/PhoB-type_DNA-bd"/>
</dbReference>
<dbReference type="InterPro" id="IPR001789">
    <property type="entry name" value="Sig_transdc_resp-reg_receiver"/>
</dbReference>
<dbReference type="InterPro" id="IPR039420">
    <property type="entry name" value="WalR-like"/>
</dbReference>
<dbReference type="InterPro" id="IPR036388">
    <property type="entry name" value="WH-like_DNA-bd_sf"/>
</dbReference>
<dbReference type="NCBIfam" id="NF007820">
    <property type="entry name" value="PRK10529.1"/>
    <property type="match status" value="1"/>
</dbReference>
<dbReference type="PANTHER" id="PTHR48111:SF50">
    <property type="entry name" value="KDP OPERON TRANSCRIPTIONAL REGULATORY PROTEIN KDPE"/>
    <property type="match status" value="1"/>
</dbReference>
<dbReference type="PANTHER" id="PTHR48111">
    <property type="entry name" value="REGULATOR OF RPOS"/>
    <property type="match status" value="1"/>
</dbReference>
<dbReference type="Pfam" id="PF00072">
    <property type="entry name" value="Response_reg"/>
    <property type="match status" value="1"/>
</dbReference>
<dbReference type="Pfam" id="PF00486">
    <property type="entry name" value="Trans_reg_C"/>
    <property type="match status" value="1"/>
</dbReference>
<dbReference type="SMART" id="SM00448">
    <property type="entry name" value="REC"/>
    <property type="match status" value="1"/>
</dbReference>
<dbReference type="SMART" id="SM00862">
    <property type="entry name" value="Trans_reg_C"/>
    <property type="match status" value="1"/>
</dbReference>
<dbReference type="SUPFAM" id="SSF52172">
    <property type="entry name" value="CheY-like"/>
    <property type="match status" value="1"/>
</dbReference>
<dbReference type="PROSITE" id="PS51755">
    <property type="entry name" value="OMPR_PHOB"/>
    <property type="match status" value="1"/>
</dbReference>
<dbReference type="PROSITE" id="PS50110">
    <property type="entry name" value="RESPONSE_REGULATORY"/>
    <property type="match status" value="1"/>
</dbReference>
<accession>P21866</accession>
<accession>P75739</accession>
<accession>P76822</accession>
<feature type="chain" id="PRO_0000081113" description="KDP operon transcriptional regulatory protein KdpE">
    <location>
        <begin position="1"/>
        <end position="225"/>
    </location>
</feature>
<feature type="domain" description="Response regulatory" evidence="1">
    <location>
        <begin position="3"/>
        <end position="116"/>
    </location>
</feature>
<feature type="DNA-binding region" description="OmpR/PhoB-type" evidence="2">
    <location>
        <begin position="126"/>
        <end position="225"/>
    </location>
</feature>
<feature type="modified residue" description="4-aspartylphosphate" evidence="1">
    <location>
        <position position="52"/>
    </location>
</feature>
<feature type="sequence conflict" description="In Ref. 1; AAA24042." evidence="4" ref="1">
    <original>LAVLLNNAGKVLTQRQL</original>
    <variation>AGRCSTMPEKYSPSGPV</variation>
    <location>
        <begin position="160"/>
        <end position="176"/>
    </location>
</feature>
<feature type="strand" evidence="5">
    <location>
        <begin position="3"/>
        <end position="7"/>
    </location>
</feature>
<feature type="helix" evidence="5">
    <location>
        <begin position="11"/>
        <end position="22"/>
    </location>
</feature>
<feature type="turn" evidence="5">
    <location>
        <begin position="23"/>
        <end position="25"/>
    </location>
</feature>
<feature type="strand" evidence="5">
    <location>
        <begin position="27"/>
        <end position="33"/>
    </location>
</feature>
<feature type="helix" evidence="5">
    <location>
        <begin position="34"/>
        <end position="44"/>
    </location>
</feature>
<feature type="strand" evidence="5">
    <location>
        <begin position="47"/>
        <end position="55"/>
    </location>
</feature>
<feature type="strand" evidence="7">
    <location>
        <begin position="56"/>
        <end position="58"/>
    </location>
</feature>
<feature type="helix" evidence="5">
    <location>
        <begin position="60"/>
        <end position="68"/>
    </location>
</feature>
<feature type="strand" evidence="5">
    <location>
        <begin position="75"/>
        <end position="80"/>
    </location>
</feature>
<feature type="helix" evidence="5">
    <location>
        <begin position="84"/>
        <end position="93"/>
    </location>
</feature>
<feature type="strand" evidence="5">
    <location>
        <begin position="96"/>
        <end position="102"/>
    </location>
</feature>
<feature type="helix" evidence="5">
    <location>
        <begin position="105"/>
        <end position="119"/>
    </location>
</feature>
<feature type="strand" evidence="6">
    <location>
        <begin position="127"/>
        <end position="130"/>
    </location>
</feature>
<feature type="strand" evidence="6">
    <location>
        <begin position="135"/>
        <end position="137"/>
    </location>
</feature>
<feature type="turn" evidence="6">
    <location>
        <begin position="138"/>
        <end position="141"/>
    </location>
</feature>
<feature type="strand" evidence="6">
    <location>
        <begin position="142"/>
        <end position="145"/>
    </location>
</feature>
<feature type="strand" evidence="6">
    <location>
        <begin position="148"/>
        <end position="150"/>
    </location>
</feature>
<feature type="helix" evidence="6">
    <location>
        <begin position="154"/>
        <end position="165"/>
    </location>
</feature>
<feature type="turn" evidence="6">
    <location>
        <begin position="166"/>
        <end position="168"/>
    </location>
</feature>
<feature type="strand" evidence="6">
    <location>
        <begin position="170"/>
        <end position="172"/>
    </location>
</feature>
<feature type="helix" evidence="6">
    <location>
        <begin position="173"/>
        <end position="180"/>
    </location>
</feature>
<feature type="strand" evidence="6">
    <location>
        <begin position="182"/>
        <end position="184"/>
    </location>
</feature>
<feature type="helix" evidence="6">
    <location>
        <begin position="189"/>
        <end position="203"/>
    </location>
</feature>
<feature type="strand" evidence="6">
    <location>
        <begin position="211"/>
        <end position="216"/>
    </location>
</feature>
<feature type="turn" evidence="6">
    <location>
        <begin position="217"/>
        <end position="219"/>
    </location>
</feature>
<feature type="strand" evidence="6">
    <location>
        <begin position="220"/>
        <end position="223"/>
    </location>
</feature>
<evidence type="ECO:0000255" key="1">
    <source>
        <dbReference type="PROSITE-ProRule" id="PRU00169"/>
    </source>
</evidence>
<evidence type="ECO:0000255" key="2">
    <source>
        <dbReference type="PROSITE-ProRule" id="PRU01091"/>
    </source>
</evidence>
<evidence type="ECO:0000269" key="3">
    <source>
    </source>
</evidence>
<evidence type="ECO:0000305" key="4"/>
<evidence type="ECO:0007829" key="5">
    <source>
        <dbReference type="PDB" id="1ZH2"/>
    </source>
</evidence>
<evidence type="ECO:0007829" key="6">
    <source>
        <dbReference type="PDB" id="3ZQ7"/>
    </source>
</evidence>
<evidence type="ECO:0007829" key="7">
    <source>
        <dbReference type="PDB" id="4KNY"/>
    </source>
</evidence>
<gene>
    <name type="primary">kdpE</name>
    <name type="ordered locus">b0694</name>
    <name type="ordered locus">JW5096</name>
</gene>
<sequence length="225" mass="25362">MTNVLIVEDEQAIRRFLRTALEGDGMRVFEAETLQRGLLEAATRKPDLIILDLGLPDGDGIEFIRDLRQWSAVPVIVLSARSEESDKIAALDAGADDYLSKPFGIGELQARLRVALRRHSATTAPDPLVKFSDVTVDLAARVIHRGEEEVHLTPIEFRLLAVLLNNAGKVLTQRQLLNQVWGPNAVEHSHYLRIYMGHLRQKLEQDPARPRHFITETGIGYRFML</sequence>
<reference key="1">
    <citation type="journal article" date="1992" name="J. Bacteriol.">
        <title>KdpD and KdpE, proteins that control expression of the kdpABC operon, are members of the two-component sensor-effector class of regulators.</title>
        <authorList>
            <person name="Walderhaug M.O."/>
            <person name="Polarek J.W."/>
            <person name="Voelkner P."/>
            <person name="Daniel J.M."/>
            <person name="Hesse J.E."/>
            <person name="Altendorf K."/>
            <person name="Epstein W."/>
        </authorList>
    </citation>
    <scope>NUCLEOTIDE SEQUENCE [GENOMIC DNA]</scope>
    <scope>FUNCTION</scope>
    <scope>SUBCELLULAR LOCATION</scope>
    <source>
        <strain>K12</strain>
    </source>
</reference>
<reference key="2">
    <citation type="journal article" date="1996" name="DNA Res.">
        <title>A 718-kb DNA sequence of the Escherichia coli K-12 genome corresponding to the 12.7-28.0 min region on the linkage map.</title>
        <authorList>
            <person name="Oshima T."/>
            <person name="Aiba H."/>
            <person name="Baba T."/>
            <person name="Fujita K."/>
            <person name="Hayashi K."/>
            <person name="Honjo A."/>
            <person name="Ikemoto K."/>
            <person name="Inada T."/>
            <person name="Itoh T."/>
            <person name="Kajihara M."/>
            <person name="Kanai K."/>
            <person name="Kashimoto K."/>
            <person name="Kimura S."/>
            <person name="Kitagawa M."/>
            <person name="Makino K."/>
            <person name="Masuda S."/>
            <person name="Miki T."/>
            <person name="Mizobuchi K."/>
            <person name="Mori H."/>
            <person name="Motomura K."/>
            <person name="Nakamura Y."/>
            <person name="Nashimoto H."/>
            <person name="Nishio Y."/>
            <person name="Saito N."/>
            <person name="Sampei G."/>
            <person name="Seki Y."/>
            <person name="Tagami H."/>
            <person name="Takemoto K."/>
            <person name="Wada C."/>
            <person name="Yamamoto Y."/>
            <person name="Yano M."/>
            <person name="Horiuchi T."/>
        </authorList>
    </citation>
    <scope>NUCLEOTIDE SEQUENCE [LARGE SCALE GENOMIC DNA]</scope>
    <source>
        <strain>K12 / W3110 / ATCC 27325 / DSM 5911</strain>
    </source>
</reference>
<reference key="3">
    <citation type="journal article" date="1997" name="Science">
        <title>The complete genome sequence of Escherichia coli K-12.</title>
        <authorList>
            <person name="Blattner F.R."/>
            <person name="Plunkett G. III"/>
            <person name="Bloch C.A."/>
            <person name="Perna N.T."/>
            <person name="Burland V."/>
            <person name="Riley M."/>
            <person name="Collado-Vides J."/>
            <person name="Glasner J.D."/>
            <person name="Rode C.K."/>
            <person name="Mayhew G.F."/>
            <person name="Gregor J."/>
            <person name="Davis N.W."/>
            <person name="Kirkpatrick H.A."/>
            <person name="Goeden M.A."/>
            <person name="Rose D.J."/>
            <person name="Mau B."/>
            <person name="Shao Y."/>
        </authorList>
    </citation>
    <scope>NUCLEOTIDE SEQUENCE [LARGE SCALE GENOMIC DNA]</scope>
    <source>
        <strain>K12 / MG1655 / ATCC 47076</strain>
    </source>
</reference>
<reference key="4">
    <citation type="journal article" date="2006" name="Mol. Syst. Biol.">
        <title>Highly accurate genome sequences of Escherichia coli K-12 strains MG1655 and W3110.</title>
        <authorList>
            <person name="Hayashi K."/>
            <person name="Morooka N."/>
            <person name="Yamamoto Y."/>
            <person name="Fujita K."/>
            <person name="Isono K."/>
            <person name="Choi S."/>
            <person name="Ohtsubo E."/>
            <person name="Baba T."/>
            <person name="Wanner B.L."/>
            <person name="Mori H."/>
            <person name="Horiuchi T."/>
        </authorList>
    </citation>
    <scope>NUCLEOTIDE SEQUENCE [LARGE SCALE GENOMIC DNA]</scope>
    <source>
        <strain>K12 / W3110 / ATCC 27325 / DSM 5911</strain>
    </source>
</reference>
<reference key="5">
    <citation type="journal article" date="1997" name="Electrophoresis">
        <title>Escherichia coli proteome analysis using the gene-protein database.</title>
        <authorList>
            <person name="VanBogelen R.A."/>
            <person name="Abshire K.Z."/>
            <person name="Moldover B."/>
            <person name="Olson E.R."/>
            <person name="Neidhardt F.C."/>
        </authorList>
    </citation>
    <scope>IDENTIFICATION BY 2D-GEL</scope>
</reference>
<name>KDPE_ECOLI</name>